<proteinExistence type="inferred from homology"/>
<reference key="1">
    <citation type="submission" date="2008-12" db="EMBL/GenBank/DDBJ databases">
        <title>Complete sequence of Chloroflexus aggregans DSM 9485.</title>
        <authorList>
            <consortium name="US DOE Joint Genome Institute"/>
            <person name="Lucas S."/>
            <person name="Copeland A."/>
            <person name="Lapidus A."/>
            <person name="Glavina del Rio T."/>
            <person name="Dalin E."/>
            <person name="Tice H."/>
            <person name="Pitluck S."/>
            <person name="Foster B."/>
            <person name="Larimer F."/>
            <person name="Land M."/>
            <person name="Hauser L."/>
            <person name="Kyrpides N."/>
            <person name="Mikhailova N."/>
            <person name="Bryant D.A."/>
            <person name="Richardson P."/>
        </authorList>
    </citation>
    <scope>NUCLEOTIDE SEQUENCE [LARGE SCALE GENOMIC DNA]</scope>
    <source>
        <strain>MD-66 / DSM 9485</strain>
    </source>
</reference>
<dbReference type="EMBL" id="CP001337">
    <property type="protein sequence ID" value="ACL25879.1"/>
    <property type="molecule type" value="Genomic_DNA"/>
</dbReference>
<dbReference type="RefSeq" id="WP_015941733.1">
    <property type="nucleotide sequence ID" value="NC_011831.1"/>
</dbReference>
<dbReference type="SMR" id="B8G6S0"/>
<dbReference type="STRING" id="326427.Cagg_3019"/>
<dbReference type="KEGG" id="cag:Cagg_3019"/>
<dbReference type="eggNOG" id="COG0091">
    <property type="taxonomic scope" value="Bacteria"/>
</dbReference>
<dbReference type="HOGENOM" id="CLU_083987_3_3_0"/>
<dbReference type="OrthoDB" id="9805969at2"/>
<dbReference type="Proteomes" id="UP000002508">
    <property type="component" value="Chromosome"/>
</dbReference>
<dbReference type="GO" id="GO:0022625">
    <property type="term" value="C:cytosolic large ribosomal subunit"/>
    <property type="evidence" value="ECO:0007669"/>
    <property type="project" value="TreeGrafter"/>
</dbReference>
<dbReference type="GO" id="GO:0019843">
    <property type="term" value="F:rRNA binding"/>
    <property type="evidence" value="ECO:0007669"/>
    <property type="project" value="UniProtKB-UniRule"/>
</dbReference>
<dbReference type="GO" id="GO:0003735">
    <property type="term" value="F:structural constituent of ribosome"/>
    <property type="evidence" value="ECO:0007669"/>
    <property type="project" value="InterPro"/>
</dbReference>
<dbReference type="GO" id="GO:0006412">
    <property type="term" value="P:translation"/>
    <property type="evidence" value="ECO:0007669"/>
    <property type="project" value="UniProtKB-UniRule"/>
</dbReference>
<dbReference type="CDD" id="cd00336">
    <property type="entry name" value="Ribosomal_L22"/>
    <property type="match status" value="1"/>
</dbReference>
<dbReference type="FunFam" id="3.90.470.10:FF:000001">
    <property type="entry name" value="50S ribosomal protein L22"/>
    <property type="match status" value="1"/>
</dbReference>
<dbReference type="Gene3D" id="3.90.470.10">
    <property type="entry name" value="Ribosomal protein L22/L17"/>
    <property type="match status" value="1"/>
</dbReference>
<dbReference type="HAMAP" id="MF_01331_B">
    <property type="entry name" value="Ribosomal_uL22_B"/>
    <property type="match status" value="1"/>
</dbReference>
<dbReference type="InterPro" id="IPR001063">
    <property type="entry name" value="Ribosomal_uL22"/>
</dbReference>
<dbReference type="InterPro" id="IPR005727">
    <property type="entry name" value="Ribosomal_uL22_bac/chlpt-type"/>
</dbReference>
<dbReference type="InterPro" id="IPR047867">
    <property type="entry name" value="Ribosomal_uL22_bac/org-type"/>
</dbReference>
<dbReference type="InterPro" id="IPR036394">
    <property type="entry name" value="Ribosomal_uL22_sf"/>
</dbReference>
<dbReference type="NCBIfam" id="TIGR01044">
    <property type="entry name" value="rplV_bact"/>
    <property type="match status" value="1"/>
</dbReference>
<dbReference type="PANTHER" id="PTHR13501">
    <property type="entry name" value="CHLOROPLAST 50S RIBOSOMAL PROTEIN L22-RELATED"/>
    <property type="match status" value="1"/>
</dbReference>
<dbReference type="PANTHER" id="PTHR13501:SF8">
    <property type="entry name" value="LARGE RIBOSOMAL SUBUNIT PROTEIN UL22M"/>
    <property type="match status" value="1"/>
</dbReference>
<dbReference type="Pfam" id="PF00237">
    <property type="entry name" value="Ribosomal_L22"/>
    <property type="match status" value="1"/>
</dbReference>
<dbReference type="SUPFAM" id="SSF54843">
    <property type="entry name" value="Ribosomal protein L22"/>
    <property type="match status" value="1"/>
</dbReference>
<accession>B8G6S0</accession>
<organism>
    <name type="scientific">Chloroflexus aggregans (strain MD-66 / DSM 9485)</name>
    <dbReference type="NCBI Taxonomy" id="326427"/>
    <lineage>
        <taxon>Bacteria</taxon>
        <taxon>Bacillati</taxon>
        <taxon>Chloroflexota</taxon>
        <taxon>Chloroflexia</taxon>
        <taxon>Chloroflexales</taxon>
        <taxon>Chloroflexineae</taxon>
        <taxon>Chloroflexaceae</taxon>
        <taxon>Chloroflexus</taxon>
    </lineage>
</organism>
<evidence type="ECO:0000255" key="1">
    <source>
        <dbReference type="HAMAP-Rule" id="MF_01331"/>
    </source>
</evidence>
<evidence type="ECO:0000305" key="2"/>
<comment type="function">
    <text evidence="1">This protein binds specifically to 23S rRNA; its binding is stimulated by other ribosomal proteins, e.g. L4, L17, and L20. It is important during the early stages of 50S assembly. It makes multiple contacts with different domains of the 23S rRNA in the assembled 50S subunit and ribosome (By similarity).</text>
</comment>
<comment type="function">
    <text evidence="1">The globular domain of the protein is located near the polypeptide exit tunnel on the outside of the subunit, while an extended beta-hairpin is found that lines the wall of the exit tunnel in the center of the 70S ribosome.</text>
</comment>
<comment type="subunit">
    <text evidence="1">Part of the 50S ribosomal subunit.</text>
</comment>
<comment type="similarity">
    <text evidence="1">Belongs to the universal ribosomal protein uL22 family.</text>
</comment>
<feature type="chain" id="PRO_1000166052" description="Large ribosomal subunit protein uL22">
    <location>
        <begin position="1"/>
        <end position="113"/>
    </location>
</feature>
<gene>
    <name evidence="1" type="primary">rplV</name>
    <name type="ordered locus">Cagg_3019</name>
</gene>
<sequence>MEAKAVTRYVRISPLKVRLVMDVVRGMPVDRALATLRYMPQKAAREVARTLKSAIANAEHNFDMNRDELYIKTIYADQGPVLKRFMPRARGMANRIRKPTTHITVVVADKSDY</sequence>
<protein>
    <recommendedName>
        <fullName evidence="1">Large ribosomal subunit protein uL22</fullName>
    </recommendedName>
    <alternativeName>
        <fullName evidence="2">50S ribosomal protein L22</fullName>
    </alternativeName>
</protein>
<keyword id="KW-0687">Ribonucleoprotein</keyword>
<keyword id="KW-0689">Ribosomal protein</keyword>
<keyword id="KW-0694">RNA-binding</keyword>
<keyword id="KW-0699">rRNA-binding</keyword>
<name>RL22_CHLAD</name>